<feature type="chain" id="PRO_0000172635" description="Phosphatidylglycerol--prolipoprotein diacylglyceryl transferase">
    <location>
        <begin position="1"/>
        <end position="427"/>
    </location>
</feature>
<feature type="transmembrane region" description="Helical" evidence="1">
    <location>
        <begin position="21"/>
        <end position="41"/>
    </location>
</feature>
<feature type="transmembrane region" description="Helical" evidence="1">
    <location>
        <begin position="53"/>
        <end position="73"/>
    </location>
</feature>
<feature type="transmembrane region" description="Helical" evidence="1">
    <location>
        <begin position="96"/>
        <end position="116"/>
    </location>
</feature>
<feature type="transmembrane region" description="Helical" evidence="1">
    <location>
        <begin position="122"/>
        <end position="142"/>
    </location>
</feature>
<feature type="transmembrane region" description="Helical" evidence="1">
    <location>
        <begin position="189"/>
        <end position="209"/>
    </location>
</feature>
<feature type="transmembrane region" description="Helical" evidence="1">
    <location>
        <begin position="256"/>
        <end position="276"/>
    </location>
</feature>
<feature type="region of interest" description="Disordered" evidence="2">
    <location>
        <begin position="280"/>
        <end position="427"/>
    </location>
</feature>
<feature type="compositionally biased region" description="Low complexity" evidence="2">
    <location>
        <begin position="299"/>
        <end position="330"/>
    </location>
</feature>
<feature type="compositionally biased region" description="Basic and acidic residues" evidence="2">
    <location>
        <begin position="332"/>
        <end position="346"/>
    </location>
</feature>
<feature type="compositionally biased region" description="Acidic residues" evidence="2">
    <location>
        <begin position="347"/>
        <end position="404"/>
    </location>
</feature>
<feature type="compositionally biased region" description="Basic and acidic residues" evidence="2">
    <location>
        <begin position="411"/>
        <end position="427"/>
    </location>
</feature>
<feature type="binding site" evidence="1">
    <location>
        <position position="144"/>
    </location>
    <ligand>
        <name>a 1,2-diacyl-sn-glycero-3-phospho-(1'-sn-glycerol)</name>
        <dbReference type="ChEBI" id="CHEBI:64716"/>
    </ligand>
</feature>
<evidence type="ECO:0000255" key="1">
    <source>
        <dbReference type="HAMAP-Rule" id="MF_01147"/>
    </source>
</evidence>
<evidence type="ECO:0000256" key="2">
    <source>
        <dbReference type="SAM" id="MobiDB-lite"/>
    </source>
</evidence>
<dbReference type="EC" id="2.5.1.145" evidence="1"/>
<dbReference type="EMBL" id="AE016958">
    <property type="protein sequence ID" value="AAS03625.1"/>
    <property type="molecule type" value="Genomic_DNA"/>
</dbReference>
<dbReference type="RefSeq" id="WP_003876220.1">
    <property type="nucleotide sequence ID" value="NZ_CP106873.1"/>
</dbReference>
<dbReference type="SMR" id="P60972"/>
<dbReference type="STRING" id="262316.MAP_1308"/>
<dbReference type="KEGG" id="mpa:MAP_1308"/>
<dbReference type="eggNOG" id="COG0682">
    <property type="taxonomic scope" value="Bacteria"/>
</dbReference>
<dbReference type="HOGENOM" id="CLU_013386_2_1_11"/>
<dbReference type="UniPathway" id="UPA00664"/>
<dbReference type="Proteomes" id="UP000000580">
    <property type="component" value="Chromosome"/>
</dbReference>
<dbReference type="GO" id="GO:0005886">
    <property type="term" value="C:plasma membrane"/>
    <property type="evidence" value="ECO:0007669"/>
    <property type="project" value="UniProtKB-SubCell"/>
</dbReference>
<dbReference type="GO" id="GO:0008961">
    <property type="term" value="F:phosphatidylglycerol-prolipoprotein diacylglyceryl transferase activity"/>
    <property type="evidence" value="ECO:0007669"/>
    <property type="project" value="UniProtKB-UniRule"/>
</dbReference>
<dbReference type="GO" id="GO:0042158">
    <property type="term" value="P:lipoprotein biosynthetic process"/>
    <property type="evidence" value="ECO:0007669"/>
    <property type="project" value="UniProtKB-UniRule"/>
</dbReference>
<dbReference type="HAMAP" id="MF_01147">
    <property type="entry name" value="Lgt"/>
    <property type="match status" value="1"/>
</dbReference>
<dbReference type="InterPro" id="IPR001640">
    <property type="entry name" value="Lgt"/>
</dbReference>
<dbReference type="NCBIfam" id="TIGR00544">
    <property type="entry name" value="lgt"/>
    <property type="match status" value="1"/>
</dbReference>
<dbReference type="NCBIfam" id="NF009611">
    <property type="entry name" value="PRK13108.1"/>
    <property type="match status" value="1"/>
</dbReference>
<dbReference type="PANTHER" id="PTHR30589:SF0">
    <property type="entry name" value="PHOSPHATIDYLGLYCEROL--PROLIPOPROTEIN DIACYLGLYCERYL TRANSFERASE"/>
    <property type="match status" value="1"/>
</dbReference>
<dbReference type="PANTHER" id="PTHR30589">
    <property type="entry name" value="PROLIPOPROTEIN DIACYLGLYCERYL TRANSFERASE"/>
    <property type="match status" value="1"/>
</dbReference>
<dbReference type="Pfam" id="PF01790">
    <property type="entry name" value="LGT"/>
    <property type="match status" value="1"/>
</dbReference>
<dbReference type="PROSITE" id="PS01311">
    <property type="entry name" value="LGT"/>
    <property type="match status" value="1"/>
</dbReference>
<reference key="1">
    <citation type="journal article" date="2005" name="Proc. Natl. Acad. Sci. U.S.A.">
        <title>The complete genome sequence of Mycobacterium avium subspecies paratuberculosis.</title>
        <authorList>
            <person name="Li L."/>
            <person name="Bannantine J.P."/>
            <person name="Zhang Q."/>
            <person name="Amonsin A."/>
            <person name="May B.J."/>
            <person name="Alt D."/>
            <person name="Banerji N."/>
            <person name="Kanjilal S."/>
            <person name="Kapur V."/>
        </authorList>
    </citation>
    <scope>NUCLEOTIDE SEQUENCE [LARGE SCALE GENOMIC DNA]</scope>
    <source>
        <strain>ATCC BAA-968 / K-10</strain>
    </source>
</reference>
<gene>
    <name evidence="1" type="primary">lgt</name>
    <name type="ordered locus">MAP_1308</name>
</gene>
<protein>
    <recommendedName>
        <fullName evidence="1">Phosphatidylglycerol--prolipoprotein diacylglyceryl transferase</fullName>
        <ecNumber evidence="1">2.5.1.145</ecNumber>
    </recommendedName>
</protein>
<proteinExistence type="inferred from homology"/>
<keyword id="KW-1003">Cell membrane</keyword>
<keyword id="KW-0472">Membrane</keyword>
<keyword id="KW-1185">Reference proteome</keyword>
<keyword id="KW-0808">Transferase</keyword>
<keyword id="KW-0812">Transmembrane</keyword>
<keyword id="KW-1133">Transmembrane helix</keyword>
<comment type="function">
    <text evidence="1">Catalyzes the transfer of the diacylglyceryl group from phosphatidylglycerol to the sulfhydryl group of the N-terminal cysteine of a prolipoprotein, the first step in the formation of mature lipoproteins.</text>
</comment>
<comment type="catalytic activity">
    <reaction evidence="1">
        <text>L-cysteinyl-[prolipoprotein] + a 1,2-diacyl-sn-glycero-3-phospho-(1'-sn-glycerol) = an S-1,2-diacyl-sn-glyceryl-L-cysteinyl-[prolipoprotein] + sn-glycerol 1-phosphate + H(+)</text>
        <dbReference type="Rhea" id="RHEA:56712"/>
        <dbReference type="Rhea" id="RHEA-COMP:14679"/>
        <dbReference type="Rhea" id="RHEA-COMP:14680"/>
        <dbReference type="ChEBI" id="CHEBI:15378"/>
        <dbReference type="ChEBI" id="CHEBI:29950"/>
        <dbReference type="ChEBI" id="CHEBI:57685"/>
        <dbReference type="ChEBI" id="CHEBI:64716"/>
        <dbReference type="ChEBI" id="CHEBI:140658"/>
        <dbReference type="EC" id="2.5.1.145"/>
    </reaction>
</comment>
<comment type="pathway">
    <text evidence="1">Protein modification; lipoprotein biosynthesis (diacylglyceryl transfer).</text>
</comment>
<comment type="subcellular location">
    <subcellularLocation>
        <location evidence="1">Cell membrane</location>
        <topology evidence="1">Multi-pass membrane protein</topology>
    </subcellularLocation>
</comment>
<comment type="similarity">
    <text evidence="1">Belongs to the Lgt family.</text>
</comment>
<sequence>MTKLLAYFPSPPQGVWHLGPVPIRAYALFIIAGIVAALLIGDRRWEARGGERGVIYDIALWTVPFGLVGGRLYHLATDWRTYWGPGGAGFGAAVRIWDGGLGIWGAVALGAVGAWIGCRRHGIPLPAFADALAPGIILAQAIGRLGNYFNQELYGRETTLPWGLEIFYRRDPSGYIDPHSLDGVSTGQVALVVQPTFLYELLWNLLIFVALLYADRRLTLGHGRLFALYVAGYCVGRFCVELLRDDTATHIAGIRINSFTSTFVFIGAVVYLMAAPKGREDPESLRGNQYVEEEPAEPEPATVAATTEAATEGVAAPADGAEAAGADATAQRPEESAEPDVEKPESEETEAAEEASEPEAEEPEAPEAEEPEEPETEEPEADSGEEPEEESGEAPEQLVAEEPEPAPQQPETKRRWGARLRERLSGR</sequence>
<organism>
    <name type="scientific">Mycolicibacterium paratuberculosis (strain ATCC BAA-968 / K-10)</name>
    <name type="common">Mycobacterium paratuberculosis</name>
    <dbReference type="NCBI Taxonomy" id="262316"/>
    <lineage>
        <taxon>Bacteria</taxon>
        <taxon>Bacillati</taxon>
        <taxon>Actinomycetota</taxon>
        <taxon>Actinomycetes</taxon>
        <taxon>Mycobacteriales</taxon>
        <taxon>Mycobacteriaceae</taxon>
        <taxon>Mycobacterium</taxon>
        <taxon>Mycobacterium avium complex (MAC)</taxon>
    </lineage>
</organism>
<accession>P60972</accession>
<name>LGT_MYCPA</name>